<feature type="chain" id="PRO_0000105166" description="Glutamyl-tRNA(Gln) amidotransferase subunit A">
    <location>
        <begin position="1"/>
        <end position="453"/>
    </location>
</feature>
<feature type="active site" description="Charge relay system" evidence="1">
    <location>
        <position position="53"/>
    </location>
</feature>
<feature type="active site" description="Charge relay system" evidence="1">
    <location>
        <position position="128"/>
    </location>
</feature>
<feature type="active site" description="Acyl-ester intermediate" evidence="1">
    <location>
        <position position="152"/>
    </location>
</feature>
<comment type="function">
    <text evidence="1">Allows the formation of correctly charged Gln-tRNA(Gln) through the transamidation of misacylated Glu-tRNA(Gln) in organisms which lack glutaminyl-tRNA synthetase. The reaction takes place in the presence of glutamine and ATP through an activated gamma-phospho-Glu-tRNA(Gln) (By similarity).</text>
</comment>
<comment type="catalytic activity">
    <reaction>
        <text>L-glutamyl-tRNA(Gln) + L-glutamine + ATP + H2O = L-glutaminyl-tRNA(Gln) + L-glutamate + ADP + phosphate + H(+)</text>
        <dbReference type="Rhea" id="RHEA:17521"/>
        <dbReference type="Rhea" id="RHEA-COMP:9681"/>
        <dbReference type="Rhea" id="RHEA-COMP:9684"/>
        <dbReference type="ChEBI" id="CHEBI:15377"/>
        <dbReference type="ChEBI" id="CHEBI:15378"/>
        <dbReference type="ChEBI" id="CHEBI:29985"/>
        <dbReference type="ChEBI" id="CHEBI:30616"/>
        <dbReference type="ChEBI" id="CHEBI:43474"/>
        <dbReference type="ChEBI" id="CHEBI:58359"/>
        <dbReference type="ChEBI" id="CHEBI:78520"/>
        <dbReference type="ChEBI" id="CHEBI:78521"/>
        <dbReference type="ChEBI" id="CHEBI:456216"/>
        <dbReference type="EC" id="6.3.5.7"/>
    </reaction>
</comment>
<comment type="subunit">
    <text evidence="1">Heterotrimer of A, B and C subunits.</text>
</comment>
<comment type="similarity">
    <text evidence="2">Belongs to the amidase family. GatA subfamily.</text>
</comment>
<reference key="1">
    <citation type="journal article" date="1997" name="Nature">
        <title>The complete genome sequence of the gastric pathogen Helicobacter pylori.</title>
        <authorList>
            <person name="Tomb J.-F."/>
            <person name="White O."/>
            <person name="Kerlavage A.R."/>
            <person name="Clayton R.A."/>
            <person name="Sutton G.G."/>
            <person name="Fleischmann R.D."/>
            <person name="Ketchum K.A."/>
            <person name="Klenk H.-P."/>
            <person name="Gill S.R."/>
            <person name="Dougherty B.A."/>
            <person name="Nelson K.E."/>
            <person name="Quackenbush J."/>
            <person name="Zhou L."/>
            <person name="Kirkness E.F."/>
            <person name="Peterson S.N."/>
            <person name="Loftus B.J."/>
            <person name="Richardson D.L."/>
            <person name="Dodson R.J."/>
            <person name="Khalak H.G."/>
            <person name="Glodek A."/>
            <person name="McKenney K."/>
            <person name="FitzGerald L.M."/>
            <person name="Lee N."/>
            <person name="Adams M.D."/>
            <person name="Hickey E.K."/>
            <person name="Berg D.E."/>
            <person name="Gocayne J.D."/>
            <person name="Utterback T.R."/>
            <person name="Peterson J.D."/>
            <person name="Kelley J.M."/>
            <person name="Cotton M.D."/>
            <person name="Weidman J.F."/>
            <person name="Fujii C."/>
            <person name="Bowman C."/>
            <person name="Watthey L."/>
            <person name="Wallin E."/>
            <person name="Hayes W.S."/>
            <person name="Borodovsky M."/>
            <person name="Karp P.D."/>
            <person name="Smith H.O."/>
            <person name="Fraser C.M."/>
            <person name="Venter J.C."/>
        </authorList>
    </citation>
    <scope>NUCLEOTIDE SEQUENCE [LARGE SCALE GENOMIC DNA]</scope>
    <source>
        <strain>ATCC 700392 / 26695</strain>
    </source>
</reference>
<protein>
    <recommendedName>
        <fullName>Glutamyl-tRNA(Gln) amidotransferase subunit A</fullName>
        <shortName>Glu-ADT subunit A</shortName>
        <ecNumber>6.3.5.7</ecNumber>
    </recommendedName>
</protein>
<sequence length="453" mass="49653">MITLKQALSLSQDELETLKNEIDAKVRASDLNAYIKAPSLNGASAKGVPILIKDNISVKGWEITCSSKILEGYVAPYHASVMENLHQNSMAGFGLSNMDEFAMGSTTESSCYGITKNPRDKNRVPGGSSGGSAAAVAGGLAVAALGSDTGGSIRQPASYCGCVGLKPTYGRVSRYGLIAYCSSFDQIGPITQNVEDASILFDAISGYDSKDSTSANLKPTQTFKNLNRDKRFKIAVLMDHIKDASNEVQLAYENTLKALKEMGHEIVEKKMLDSHYQISIYYIISMAEASSNLARFDGVRYGRRAQNIKDLKELYLKSRSEGFGDEVKRRIMLGNFVLSSGYYDAYYLKAQQMRLIIKEQYNKIFEEVDLIFTPVAPTSAHLFNYHASPLEMYLSDIYTIGANLSGLPALSLPVAKDPLGLPIGMQFIAKAFDEQSLLDVSYALEQELDLKLD</sequence>
<name>GATA_HELPY</name>
<proteinExistence type="inferred from homology"/>
<keyword id="KW-0067">ATP-binding</keyword>
<keyword id="KW-0436">Ligase</keyword>
<keyword id="KW-0547">Nucleotide-binding</keyword>
<keyword id="KW-0648">Protein biosynthesis</keyword>
<keyword id="KW-1185">Reference proteome</keyword>
<evidence type="ECO:0000250" key="1"/>
<evidence type="ECO:0000305" key="2"/>
<accession>P56114</accession>
<organism>
    <name type="scientific">Helicobacter pylori (strain ATCC 700392 / 26695)</name>
    <name type="common">Campylobacter pylori</name>
    <dbReference type="NCBI Taxonomy" id="85962"/>
    <lineage>
        <taxon>Bacteria</taxon>
        <taxon>Pseudomonadati</taxon>
        <taxon>Campylobacterota</taxon>
        <taxon>Epsilonproteobacteria</taxon>
        <taxon>Campylobacterales</taxon>
        <taxon>Helicobacteraceae</taxon>
        <taxon>Helicobacter</taxon>
    </lineage>
</organism>
<gene>
    <name type="primary">gatA</name>
    <name type="ordered locus">HP_0830</name>
</gene>
<dbReference type="EC" id="6.3.5.7"/>
<dbReference type="EMBL" id="AE000511">
    <property type="protein sequence ID" value="AAD07880.1"/>
    <property type="molecule type" value="Genomic_DNA"/>
</dbReference>
<dbReference type="PIR" id="F64623">
    <property type="entry name" value="F64623"/>
</dbReference>
<dbReference type="RefSeq" id="NP_207623.1">
    <property type="nucleotide sequence ID" value="NC_000915.1"/>
</dbReference>
<dbReference type="RefSeq" id="WP_000631468.1">
    <property type="nucleotide sequence ID" value="NC_018939.1"/>
</dbReference>
<dbReference type="SMR" id="P56114"/>
<dbReference type="DIP" id="DIP-3178N"/>
<dbReference type="IntAct" id="P56114">
    <property type="interactions" value="8"/>
</dbReference>
<dbReference type="MINT" id="P56114"/>
<dbReference type="STRING" id="85962.HP_0830"/>
<dbReference type="PaxDb" id="85962-C694_04255"/>
<dbReference type="EnsemblBacteria" id="AAD07880">
    <property type="protein sequence ID" value="AAD07880"/>
    <property type="gene ID" value="HP_0830"/>
</dbReference>
<dbReference type="KEGG" id="heo:C694_04255"/>
<dbReference type="KEGG" id="hpy:HP_0830"/>
<dbReference type="PATRIC" id="fig|85962.47.peg.885"/>
<dbReference type="eggNOG" id="COG0154">
    <property type="taxonomic scope" value="Bacteria"/>
</dbReference>
<dbReference type="InParanoid" id="P56114"/>
<dbReference type="OrthoDB" id="9811471at2"/>
<dbReference type="PhylomeDB" id="P56114"/>
<dbReference type="Proteomes" id="UP000000429">
    <property type="component" value="Chromosome"/>
</dbReference>
<dbReference type="GO" id="GO:0030956">
    <property type="term" value="C:glutamyl-tRNA(Gln) amidotransferase complex"/>
    <property type="evidence" value="ECO:0007669"/>
    <property type="project" value="InterPro"/>
</dbReference>
<dbReference type="GO" id="GO:0005524">
    <property type="term" value="F:ATP binding"/>
    <property type="evidence" value="ECO:0007669"/>
    <property type="project" value="UniProtKB-KW"/>
</dbReference>
<dbReference type="GO" id="GO:0050567">
    <property type="term" value="F:glutaminyl-tRNA synthase (glutamine-hydrolyzing) activity"/>
    <property type="evidence" value="ECO:0007669"/>
    <property type="project" value="UniProtKB-UniRule"/>
</dbReference>
<dbReference type="GO" id="GO:0006412">
    <property type="term" value="P:translation"/>
    <property type="evidence" value="ECO:0007669"/>
    <property type="project" value="UniProtKB-UniRule"/>
</dbReference>
<dbReference type="Gene3D" id="3.90.1300.10">
    <property type="entry name" value="Amidase signature (AS) domain"/>
    <property type="match status" value="1"/>
</dbReference>
<dbReference type="HAMAP" id="MF_00120">
    <property type="entry name" value="GatA"/>
    <property type="match status" value="1"/>
</dbReference>
<dbReference type="InterPro" id="IPR000120">
    <property type="entry name" value="Amidase"/>
</dbReference>
<dbReference type="InterPro" id="IPR020556">
    <property type="entry name" value="Amidase_CS"/>
</dbReference>
<dbReference type="InterPro" id="IPR023631">
    <property type="entry name" value="Amidase_dom"/>
</dbReference>
<dbReference type="InterPro" id="IPR036928">
    <property type="entry name" value="AS_sf"/>
</dbReference>
<dbReference type="InterPro" id="IPR004412">
    <property type="entry name" value="GatA"/>
</dbReference>
<dbReference type="NCBIfam" id="TIGR00132">
    <property type="entry name" value="gatA"/>
    <property type="match status" value="1"/>
</dbReference>
<dbReference type="PANTHER" id="PTHR11895:SF151">
    <property type="entry name" value="GLUTAMYL-TRNA(GLN) AMIDOTRANSFERASE SUBUNIT A"/>
    <property type="match status" value="1"/>
</dbReference>
<dbReference type="PANTHER" id="PTHR11895">
    <property type="entry name" value="TRANSAMIDASE"/>
    <property type="match status" value="1"/>
</dbReference>
<dbReference type="Pfam" id="PF01425">
    <property type="entry name" value="Amidase"/>
    <property type="match status" value="1"/>
</dbReference>
<dbReference type="SUPFAM" id="SSF75304">
    <property type="entry name" value="Amidase signature (AS) enzymes"/>
    <property type="match status" value="1"/>
</dbReference>
<dbReference type="PROSITE" id="PS00571">
    <property type="entry name" value="AMIDASES"/>
    <property type="match status" value="1"/>
</dbReference>